<organism>
    <name type="scientific">Nostoc sp. (strain PCC 7120 / SAG 25.82 / UTEX 2576)</name>
    <dbReference type="NCBI Taxonomy" id="103690"/>
    <lineage>
        <taxon>Bacteria</taxon>
        <taxon>Bacillati</taxon>
        <taxon>Cyanobacteriota</taxon>
        <taxon>Cyanophyceae</taxon>
        <taxon>Nostocales</taxon>
        <taxon>Nostocaceae</taxon>
        <taxon>Nostoc</taxon>
    </lineage>
</organism>
<comment type="function">
    <text evidence="1 2">A major RuBisCO chaperone. Acts after GroEL-GroES chaperonin to fold and/or assemble the large subunit of RuBisCO (ccbL, rbcL). Cooperates with RbcX in RbcL folding, plays the major role in assembly of dimers into RbcL(8)-Raf1(8) intermediate complexes. RbcS replaces Raf1, leading to holoenzyme formation.</text>
</comment>
<comment type="function">
    <text evidence="2">In vitro acts as an antagonist to CcmM35, suggesting it might regulate RuBisCO condensation and decondensation.</text>
</comment>
<comment type="subunit">
    <text evidence="2">Homodimer. Forms an RbcL(8)-Raf1(8) complex. Each Raf1 dimer clamps the exterior of an RbcL dimer, protecting it. The extreme C-terminus (residues 354-361) inserts into the catalytic pocket of RbcL where the Glu-361 forms a salt bridge with 'Lys-202'. This insertion probably contributes to the assembly of RbcL(8). Forms complexes of many stoichiometries with RbcL with and without RbcS. RbcX and Raf1 can bind simultaneously to RbcL.</text>
</comment>
<comment type="subcellular location">
    <subcellularLocation>
        <location evidence="1">Cytoplasm</location>
    </subcellularLocation>
</comment>
<comment type="domain">
    <text evidence="1 2">Has 3 domains, the N-terminal alpha-helical domain, an extended flexible linker and the C-terminal beta-sheet domain. The 2 C-terminal beta-sheet domains are swapped and pack against each other to form the dimer interface.</text>
</comment>
<comment type="similarity">
    <text evidence="1">Belongs to the RAF family.</text>
</comment>
<accession>Q8YLP6</accession>
<feature type="chain" id="PRO_0000451576" description="RuBisCO accumulation factor 1">
    <location>
        <begin position="1"/>
        <end position="361"/>
    </location>
</feature>
<feature type="region of interest" description="N-terminal alpha-helix" evidence="1 4">
    <location>
        <begin position="16"/>
        <end position="197"/>
    </location>
</feature>
<feature type="region of interest" description="C-terminal beta-sheet" evidence="1 4">
    <location>
        <begin position="221"/>
        <end position="347"/>
    </location>
</feature>
<feature type="mutagenesis site" description="Forms more RbcL(2)-Raf1(2) but little RbcL(8)-Raf1(8)." evidence="2">
    <location>
        <begin position="354"/>
        <end position="361"/>
    </location>
</feature>
<feature type="mutagenesis site" description="Forms more RbcL(2)-Raf1(2) but little RbcL(8)-Raf1(8)." evidence="2">
    <original>E</original>
    <variation>EHHH</variation>
    <location>
        <position position="361"/>
    </location>
</feature>
<feature type="helix" evidence="9">
    <location>
        <begin position="18"/>
        <end position="28"/>
    </location>
</feature>
<feature type="helix" evidence="9">
    <location>
        <begin position="33"/>
        <end position="45"/>
    </location>
</feature>
<feature type="helix" evidence="9">
    <location>
        <begin position="50"/>
        <end position="56"/>
    </location>
</feature>
<feature type="helix" evidence="9">
    <location>
        <begin position="61"/>
        <end position="79"/>
    </location>
</feature>
<feature type="helix" evidence="9">
    <location>
        <begin position="84"/>
        <end position="92"/>
    </location>
</feature>
<feature type="helix" evidence="9">
    <location>
        <begin position="95"/>
        <end position="99"/>
    </location>
</feature>
<feature type="turn" evidence="9">
    <location>
        <begin position="100"/>
        <end position="103"/>
    </location>
</feature>
<feature type="helix" evidence="9">
    <location>
        <begin position="106"/>
        <end position="118"/>
    </location>
</feature>
<feature type="helix" evidence="9">
    <location>
        <begin position="123"/>
        <end position="136"/>
    </location>
</feature>
<feature type="strand" evidence="8">
    <location>
        <begin position="139"/>
        <end position="141"/>
    </location>
</feature>
<feature type="helix" evidence="9">
    <location>
        <begin position="150"/>
        <end position="164"/>
    </location>
</feature>
<feature type="strand" evidence="9">
    <location>
        <begin position="167"/>
        <end position="169"/>
    </location>
</feature>
<feature type="helix" evidence="9">
    <location>
        <begin position="170"/>
        <end position="181"/>
    </location>
</feature>
<feature type="helix" evidence="9">
    <location>
        <begin position="185"/>
        <end position="196"/>
    </location>
</feature>
<feature type="strand" evidence="9">
    <location>
        <begin position="216"/>
        <end position="218"/>
    </location>
</feature>
<feature type="strand" evidence="9">
    <location>
        <begin position="222"/>
        <end position="231"/>
    </location>
</feature>
<feature type="helix" evidence="9">
    <location>
        <begin position="234"/>
        <end position="238"/>
    </location>
</feature>
<feature type="turn" evidence="9">
    <location>
        <begin position="247"/>
        <end position="250"/>
    </location>
</feature>
<feature type="strand" evidence="8">
    <location>
        <begin position="251"/>
        <end position="254"/>
    </location>
</feature>
<feature type="strand" evidence="9">
    <location>
        <begin position="259"/>
        <end position="263"/>
    </location>
</feature>
<feature type="helix" evidence="9">
    <location>
        <begin position="267"/>
        <end position="271"/>
    </location>
</feature>
<feature type="strand" evidence="9">
    <location>
        <begin position="273"/>
        <end position="281"/>
    </location>
</feature>
<feature type="helix" evidence="9">
    <location>
        <begin position="282"/>
        <end position="284"/>
    </location>
</feature>
<feature type="strand" evidence="9">
    <location>
        <begin position="295"/>
        <end position="301"/>
    </location>
</feature>
<feature type="strand" evidence="9">
    <location>
        <begin position="311"/>
        <end position="316"/>
    </location>
</feature>
<feature type="strand" evidence="9">
    <location>
        <begin position="318"/>
        <end position="325"/>
    </location>
</feature>
<feature type="strand" evidence="9">
    <location>
        <begin position="334"/>
        <end position="342"/>
    </location>
</feature>
<feature type="helix" evidence="10">
    <location>
        <begin position="349"/>
        <end position="352"/>
    </location>
</feature>
<protein>
    <recommendedName>
        <fullName evidence="1 3">RuBisCO accumulation factor 1</fullName>
    </recommendedName>
</protein>
<reference key="1">
    <citation type="journal article" date="2001" name="DNA Res.">
        <title>Complete genomic sequence of the filamentous nitrogen-fixing cyanobacterium Anabaena sp. strain PCC 7120.</title>
        <authorList>
            <person name="Kaneko T."/>
            <person name="Nakamura Y."/>
            <person name="Wolk C.P."/>
            <person name="Kuritz T."/>
            <person name="Sasamoto S."/>
            <person name="Watanabe A."/>
            <person name="Iriguchi M."/>
            <person name="Ishikawa A."/>
            <person name="Kawashima K."/>
            <person name="Kimura T."/>
            <person name="Kishida Y."/>
            <person name="Kohara M."/>
            <person name="Matsumoto M."/>
            <person name="Matsuno A."/>
            <person name="Muraki A."/>
            <person name="Nakazaki N."/>
            <person name="Shimpo S."/>
            <person name="Sugimoto M."/>
            <person name="Takazawa M."/>
            <person name="Yamada M."/>
            <person name="Yasuda M."/>
            <person name="Tabata S."/>
        </authorList>
    </citation>
    <scope>NUCLEOTIDE SEQUENCE [LARGE SCALE GENOMIC DNA]</scope>
    <source>
        <strain>PCC 7120 / SAG 25.82 / UTEX 2576</strain>
    </source>
</reference>
<reference evidence="5 6 7" key="2">
    <citation type="journal article" date="2020" name="Nat. Plants">
        <title>Molecular basis for the assembly of RuBisCO assisted by the chaperone Raf1.</title>
        <authorList>
            <person name="Xia L.Y."/>
            <person name="Jiang Y.L."/>
            <person name="Kong W.W."/>
            <person name="Sun H."/>
            <person name="Li W.F."/>
            <person name="Chen Y."/>
            <person name="Zhou C.Z."/>
        </authorList>
    </citation>
    <scope>X-RAY CRYSTALLOGRAPHY (2.85 ANGSTROMS)</scope>
    <scope>X-RAY CRYSTALLOGRAPHY (3.00 ANGSTROMS) IN COMPLEX WITH RUBISCO LARGE SUBUNIT (RBCL)</scope>
    <scope>STRUCTURE BY ELECTRON MICROSCOPY (3.37 ANGSTROMS) OF 206-361 IN COMPLEX WITH RUBISCO</scope>
    <scope>FUNCTION</scope>
    <scope>SUBUNIT</scope>
    <scope>DOMAIN</scope>
    <scope>MUTAGENESIS OF 354-LYS--GLU-361 AND GLU-361</scope>
    <source>
        <strain>PCC 7120 / SAG 25.82 / UTEX 2576</strain>
    </source>
</reference>
<proteinExistence type="evidence at protein level"/>
<keyword id="KW-0002">3D-structure</keyword>
<keyword id="KW-0120">Carbon dioxide fixation</keyword>
<keyword id="KW-0143">Chaperone</keyword>
<keyword id="KW-0963">Cytoplasm</keyword>
<keyword id="KW-0602">Photosynthesis</keyword>
<keyword id="KW-1185">Reference proteome</keyword>
<gene>
    <name evidence="1 3" type="primary">raf1</name>
    <name type="ordered locus">all5250</name>
</gene>
<evidence type="ECO:0000255" key="1">
    <source>
        <dbReference type="HAMAP-Rule" id="MF_00856"/>
    </source>
</evidence>
<evidence type="ECO:0000269" key="2">
    <source>
    </source>
</evidence>
<evidence type="ECO:0000303" key="3">
    <source>
    </source>
</evidence>
<evidence type="ECO:0000305" key="4">
    <source>
    </source>
</evidence>
<evidence type="ECO:0007744" key="5">
    <source>
        <dbReference type="PDB" id="6KKM"/>
    </source>
</evidence>
<evidence type="ECO:0007744" key="6">
    <source>
        <dbReference type="PDB" id="6KKN"/>
    </source>
</evidence>
<evidence type="ECO:0007744" key="7">
    <source>
        <dbReference type="PDB" id="6LRR"/>
    </source>
</evidence>
<evidence type="ECO:0007829" key="8">
    <source>
        <dbReference type="PDB" id="6KKM"/>
    </source>
</evidence>
<evidence type="ECO:0007829" key="9">
    <source>
        <dbReference type="PDB" id="6KKN"/>
    </source>
</evidence>
<evidence type="ECO:0007829" key="10">
    <source>
        <dbReference type="PDB" id="6LRR"/>
    </source>
</evidence>
<dbReference type="EMBL" id="BA000019">
    <property type="protein sequence ID" value="BAB76949.1"/>
    <property type="molecule type" value="Genomic_DNA"/>
</dbReference>
<dbReference type="PIR" id="AB2462">
    <property type="entry name" value="AB2462"/>
</dbReference>
<dbReference type="RefSeq" id="WP_010999374.1">
    <property type="nucleotide sequence ID" value="NZ_RSCN01000005.1"/>
</dbReference>
<dbReference type="PDB" id="6KKM">
    <property type="method" value="X-ray"/>
    <property type="resolution" value="3.00 A"/>
    <property type="chains" value="E/F/G/H=1-361"/>
</dbReference>
<dbReference type="PDB" id="6KKN">
    <property type="method" value="X-ray"/>
    <property type="resolution" value="2.85 A"/>
    <property type="chains" value="A=1-361"/>
</dbReference>
<dbReference type="PDB" id="6LRR">
    <property type="method" value="EM"/>
    <property type="resolution" value="3.37 A"/>
    <property type="chains" value="I/J/K/L/M/N/O/P=206-361"/>
</dbReference>
<dbReference type="PDB" id="7XSD">
    <property type="method" value="EM"/>
    <property type="resolution" value="3.30 A"/>
    <property type="chains" value="I/J/K/L/M/N/O/P=1-361"/>
</dbReference>
<dbReference type="PDBsum" id="6KKM"/>
<dbReference type="PDBsum" id="6KKN"/>
<dbReference type="PDBsum" id="6LRR"/>
<dbReference type="PDBsum" id="7XSD"/>
<dbReference type="EMDB" id="EMD-0959"/>
<dbReference type="SMR" id="Q8YLP6"/>
<dbReference type="STRING" id="103690.gene:10497309"/>
<dbReference type="KEGG" id="ana:all5250"/>
<dbReference type="eggNOG" id="ENOG502Z7IG">
    <property type="taxonomic scope" value="Bacteria"/>
</dbReference>
<dbReference type="OrthoDB" id="420612at2"/>
<dbReference type="Proteomes" id="UP000002483">
    <property type="component" value="Chromosome"/>
</dbReference>
<dbReference type="GO" id="GO:0005737">
    <property type="term" value="C:cytoplasm"/>
    <property type="evidence" value="ECO:0007669"/>
    <property type="project" value="UniProtKB-SubCell"/>
</dbReference>
<dbReference type="GO" id="GO:0015977">
    <property type="term" value="P:carbon fixation"/>
    <property type="evidence" value="ECO:0007669"/>
    <property type="project" value="UniProtKB-UniRule"/>
</dbReference>
<dbReference type="GO" id="GO:0015979">
    <property type="term" value="P:photosynthesis"/>
    <property type="evidence" value="ECO:0007669"/>
    <property type="project" value="UniProtKB-KW"/>
</dbReference>
<dbReference type="GO" id="GO:0110102">
    <property type="term" value="P:ribulose bisphosphate carboxylase complex assembly"/>
    <property type="evidence" value="ECO:0000314"/>
    <property type="project" value="UniProtKB"/>
</dbReference>
<dbReference type="HAMAP" id="MF_00856">
    <property type="entry name" value="Raf1"/>
    <property type="match status" value="1"/>
</dbReference>
<dbReference type="InterPro" id="IPR037494">
    <property type="entry name" value="RAF1"/>
</dbReference>
<dbReference type="InterPro" id="IPR040858">
    <property type="entry name" value="Raf1_C"/>
</dbReference>
<dbReference type="InterPro" id="IPR046382">
    <property type="entry name" value="Raf1_cyn"/>
</dbReference>
<dbReference type="InterPro" id="IPR040781">
    <property type="entry name" value="Raf1_HTH"/>
</dbReference>
<dbReference type="InterPro" id="IPR041358">
    <property type="entry name" value="Raf1_N"/>
</dbReference>
<dbReference type="PANTHER" id="PTHR35299">
    <property type="entry name" value="RUBISCO ACCUMULATION FACTOR 1"/>
    <property type="match status" value="1"/>
</dbReference>
<dbReference type="PANTHER" id="PTHR35299:SF6">
    <property type="entry name" value="RUBISCO ACCUMULATION FACTOR 1"/>
    <property type="match status" value="1"/>
</dbReference>
<dbReference type="Pfam" id="PF18579">
    <property type="entry name" value="Raf1_HTH"/>
    <property type="match status" value="1"/>
</dbReference>
<dbReference type="Pfam" id="PF18578">
    <property type="entry name" value="Raf1_N"/>
    <property type="match status" value="1"/>
</dbReference>
<dbReference type="Pfam" id="PF18087">
    <property type="entry name" value="RuBisCo_chap_C"/>
    <property type="match status" value="1"/>
</dbReference>
<sequence>MTELPPNAPNPENATNELAQELLRKLRQKQGNWVEWGQAIASLQKSGYNPQDIFEATGFEPVQQNQVIVGSQVYNSLEKSGASAATLAHYATRGSDVLYELRLLTHEERAAAGDLTFTHKVDADEAREIAKAIKDFSRFRILPEGFSNHPGDAVAYQAWKLARQYSDLQERSRLIARGLRFAHSETARKQIEQLLVDFTVVSQRPAPIPPFFRFDTEDELPRIVPVVGQLPLKAEELKAVPLVEEIEPFRLVKFSGEQAWVALPGWQVLLAAEDPVTILATSDRFPKQNQTEPGPVLVVVDRSQREWNDFSYFVVDHDGELDFQWFETKPEFPILGKVIILVRPRRILDENVTKDSWQIDE</sequence>
<name>RAF1_NOSS1</name>